<sequence>MKPEEIRVNGKEIFKDEEEEDKDLFWFEKPLVTLLFDYKRWNRPLRYIKNDRFENAVSNKMSQYFFHTCPSDGKKIISFTYPPSLSTIEEIIQKRMSLYTTEKGSPEDLYNNWVYTNKKKKNNLSNELINRIEAIEKGSVSIDVLEKRIRLCHDENEQKCLPKWYDPFFNGPYRGTITKVDSQNEDEHFGEMTWKKKIYDIPHKLKNSQEFEEKRNTFHFNRKLLSTDSNNLFTPIGEFDEELASSFYLKEIFLDSEKKSLYSENQKKNGKQPVDTIKNNSNDQALRKHEIEIEKMNKKLPRWSYKLIDDLEQQEEENPEESTGNPGIRSRKAKRVVIYTDKDQNIHTDTSTDSDQAEEIALIRYSQQSDFRRDLIKGSMRSQRRKTLILEMFQANAHPPLFLDRLNKTSFSFNFSKMSMGKELEFKTANSENAEKREAVIKEKTDKSDRLAIAETWDSVTFAQPIRGCILVAQSIVRKYIILPTLIIGKNLGRILFWQSPEWDEDFHEWKKEMHIKCTYNGVQLSETEFPKAWLTDGIQIKILFPFSLKPWHRSKQTSLQVDPIKVKKQNFCFLTVWGRETEQPFGPPRKNPPFFKPILKELKKEMINRFFRVPKTLKNGTKGFMKVEKEKTTLIIQIVFFLKRKMKEFLFVFVKVNPTPLVRSQKIYESNENEKNSILSNKITYESNIQKKSTIDLKNLSLTEKKIKDLSDHTSIIRNQIERVAKDKKRIYLISDRNPSTGETGWYDKDKGRESKKGIWQIFKKRSTRLIRKWPYFLKSLIQKIYTETLLFTISSTDDYAKFFIESTKKSLNKHIYNDEKDKRVIDEINQNTIEFISTINRSFSNITNIFNNSNKNSLTYFELFSLSQAYVFLKLSQTQVFNLYCLGSLLQYHGASTLFKKKIKDYLGSQGIFNFKLKQKKLQNSGINDWKNWLRSHYQYNLPKIRWSRIVPQKWRNRINERRTIKKKGSIFSHSYAKENDQFIYYKKQKNFRMNSLTNQKEKLKKHYRYDLSSYKYLHYEELKNSPLISRSPFQIKGGQEIPYNYNNYNRPKYESFFYVPEIIAINDYLIMGEYVFNTDKNRDRKYLDWGILNLGFKKNINIEYWTHMDTRPFSQDTRTRSNDYRVVENKNLFFLRIHQEINPSNQKNTLFDWMGMNEEMLYYSISSIEPWFFPEFVPRYDIYKIKPCIIPIKSLFLNFYGKESISKNINVNRKANHDTSSNFKKYPVFKNINQEEKEGQGQEVLRSNAQNQQKSFIEKDYKESDIQKPRTKAQSKNNKETELDSFLKKYLLFQLRWNNSLNQKVIDNIKVYSLLLRLKNPREIAISSIQRGEMRLDVMLFQKDITLSGLIKGGLLVIEPIRLYLKWDFQFFMYQIVGISLVHKDKQQIKTRCRIKEYVDKMDFDGSFLPYGKTLVKGHEKHYDLLVPEHILSPRRRRELRILMSFNSGKENIMGRGPFILNGKSVRNCEPFFYEDKYLDTDANKFIQFKFFLWPNYRLEELACMNRYWFDSNNGSRFSMLRIRMYPRHRIL</sequence>
<reference key="1">
    <citation type="journal article" date="2006" name="BMC Evol. Biol.">
        <title>Complete plastid genome sequences of Drimys, Liriodendron, and Piper: implications for the phylogenetic relationships of magnoliids.</title>
        <authorList>
            <person name="Cai Z."/>
            <person name="Penaflor C."/>
            <person name="Kuehl J.V."/>
            <person name="Leebens-Mack J."/>
            <person name="Carlson J.E."/>
            <person name="dePamphilis C.W."/>
            <person name="Boore J.L."/>
            <person name="Jansen R.K."/>
        </authorList>
    </citation>
    <scope>NUCLEOTIDE SEQUENCE [LARGE SCALE GENOMIC DNA]</scope>
</reference>
<comment type="function">
    <text evidence="1">Involved in protein precursor import into chloroplasts. May be part of an intermediate translocation complex acting as a protein-conducting channel at the inner envelope.</text>
</comment>
<comment type="subunit">
    <text evidence="1">Part of the Tic complex.</text>
</comment>
<comment type="subcellular location">
    <subcellularLocation>
        <location evidence="1">Plastid</location>
        <location evidence="1">Chloroplast</location>
    </subcellularLocation>
</comment>
<comment type="similarity">
    <text evidence="3">Belongs to the TIC214 family.</text>
</comment>
<comment type="caution">
    <text evidence="3">Could be the product of a pseudogene. In P.cenocladum this protein is in two parts: a N-terminal section of 308 AA and a C-terminal section of 1535 AA.</text>
</comment>
<proteinExistence type="uncertain"/>
<gene>
    <name evidence="1" type="primary">TIC214</name>
    <name type="synonym">ycf1</name>
</gene>
<accession>P0C262</accession>
<protein>
    <recommendedName>
        <fullName evidence="1">Putative protein TIC 214 C-terminal part</fullName>
    </recommendedName>
    <alternativeName>
        <fullName evidence="1">Translocon at the inner envelope membrane of chloroplasts 214</fullName>
        <shortName evidence="1">AtTIC214</shortName>
    </alternativeName>
</protein>
<geneLocation type="chloroplast"/>
<organism>
    <name type="scientific">Piper cenocladum</name>
    <name type="common">Ant piper</name>
    <dbReference type="NCBI Taxonomy" id="398741"/>
    <lineage>
        <taxon>Eukaryota</taxon>
        <taxon>Viridiplantae</taxon>
        <taxon>Streptophyta</taxon>
        <taxon>Embryophyta</taxon>
        <taxon>Tracheophyta</taxon>
        <taxon>Spermatophyta</taxon>
        <taxon>Magnoliopsida</taxon>
        <taxon>Magnoliidae</taxon>
        <taxon>Piperales</taxon>
        <taxon>Piperaceae</taxon>
        <taxon>Piper</taxon>
    </lineage>
</organism>
<evidence type="ECO:0000250" key="1">
    <source>
        <dbReference type="UniProtKB" id="P56785"/>
    </source>
</evidence>
<evidence type="ECO:0000256" key="2">
    <source>
        <dbReference type="SAM" id="MobiDB-lite"/>
    </source>
</evidence>
<evidence type="ECO:0000305" key="3"/>
<keyword id="KW-0150">Chloroplast</keyword>
<keyword id="KW-0934">Plastid</keyword>
<keyword id="KW-0653">Protein transport</keyword>
<keyword id="KW-0813">Transport</keyword>
<dbReference type="EMBL" id="DQ887677">
    <property type="status" value="NOT_ANNOTATED_CDS"/>
    <property type="molecule type" value="Genomic_DNA"/>
</dbReference>
<dbReference type="SMR" id="P0C262"/>
<dbReference type="GO" id="GO:0009507">
    <property type="term" value="C:chloroplast"/>
    <property type="evidence" value="ECO:0007669"/>
    <property type="project" value="UniProtKB-SubCell"/>
</dbReference>
<dbReference type="GO" id="GO:0016020">
    <property type="term" value="C:membrane"/>
    <property type="evidence" value="ECO:0007669"/>
    <property type="project" value="InterPro"/>
</dbReference>
<dbReference type="GO" id="GO:0015031">
    <property type="term" value="P:protein transport"/>
    <property type="evidence" value="ECO:0007669"/>
    <property type="project" value="UniProtKB-KW"/>
</dbReference>
<dbReference type="InterPro" id="IPR008896">
    <property type="entry name" value="TIC214"/>
</dbReference>
<dbReference type="PANTHER" id="PTHR33163:SF40">
    <property type="entry name" value="PROTEIN TIC 214"/>
    <property type="match status" value="1"/>
</dbReference>
<dbReference type="PANTHER" id="PTHR33163">
    <property type="entry name" value="PROTEIN TIC 214-RELATED"/>
    <property type="match status" value="1"/>
</dbReference>
<dbReference type="Pfam" id="PF05758">
    <property type="entry name" value="Ycf1"/>
    <property type="match status" value="1"/>
</dbReference>
<name>T214B_PIPCE</name>
<feature type="chain" id="PRO_0000262759" description="Putative protein TIC 214 C-terminal part">
    <location>
        <begin position="1"/>
        <end position="1535"/>
    </location>
</feature>
<feature type="region of interest" description="Disordered" evidence="2">
    <location>
        <begin position="264"/>
        <end position="283"/>
    </location>
</feature>
<feature type="region of interest" description="Disordered" evidence="2">
    <location>
        <begin position="312"/>
        <end position="333"/>
    </location>
</feature>
<feature type="region of interest" description="Disordered" evidence="2">
    <location>
        <begin position="1263"/>
        <end position="1282"/>
    </location>
</feature>